<comment type="function">
    <text evidence="1 2 3">Component of the general transcription and DNA repair factor IIH (TFIIH) core complex, which is involved in general and transcription-coupled nucleotide excision repair (NER) of damaged DNA and in RNA transcription by RNA polymerase II (By similarity). In NER, TFIIH acts by opening DNA around the lesion to allow the excision of the damaged oligonucleotide and its replacement by a new DNA fragment (By similarity). In transcription, TFIIH has an essential role in transcription initiation (By similarity). When the pre-initiation complex (PIC) has been established, TFIIH is required for promoter opening and promoter escape (By similarity). Necessary for the stability of the TFIIH complex and for the presence of normal levels of TFIIH in the cell (PubMed:34824371). Required for efficient binding of TFIIH to damaged DNA (PubMed:34824371). Dispensable for normal development, but required when transcription is challenged (PubMed:34824371).</text>
</comment>
<comment type="subunit">
    <text evidence="2">Component of the 7-subunit TFIIH core complex.</text>
</comment>
<comment type="subcellular location">
    <subcellularLocation>
        <location evidence="2 3">Nucleus</location>
    </subcellularLocation>
    <subcellularLocation>
        <location evidence="3">Chromosome</location>
    </subcellularLocation>
    <text evidence="3">Localized to paired homologous chromosomes (bivalents) about 10 minutes after UV irradiation, but localization is lost after 35 minutes, probably as a result of successful DNA damage repair as part of the TFIIH complex.</text>
</comment>
<comment type="disruption phenotype">
    <text evidence="3">Auxin-induced degradation of the protein causes no obvious phenotype in germ cells and early embryos.</text>
</comment>
<comment type="similarity">
    <text evidence="2">Belongs to the TFB5 family.</text>
</comment>
<accession>Q9N390</accession>
<keyword id="KW-0158">Chromosome</keyword>
<keyword id="KW-0227">DNA damage</keyword>
<keyword id="KW-0234">DNA repair</keyword>
<keyword id="KW-0539">Nucleus</keyword>
<keyword id="KW-1185">Reference proteome</keyword>
<keyword id="KW-0804">Transcription</keyword>
<keyword id="KW-0805">Transcription regulation</keyword>
<sequence>MVNVKKGVLVTSDPAFRQLLIHLDDSRQLGSKFIVRELDDTHLFIEKEIVPMLENKVEQIMENMNPEAVDK</sequence>
<proteinExistence type="inferred from homology"/>
<reference evidence="6" key="1">
    <citation type="journal article" date="1998" name="Science">
        <title>Genome sequence of the nematode C. elegans: a platform for investigating biology.</title>
        <authorList>
            <consortium name="The C. elegans sequencing consortium"/>
        </authorList>
    </citation>
    <scope>NUCLEOTIDE SEQUENCE [LARGE SCALE GENOMIC DNA]</scope>
    <source>
        <strain evidence="6">Bristol N2</strain>
    </source>
</reference>
<reference evidence="5" key="2">
    <citation type="journal article" date="2021" name="Commun. Biol.">
        <title>C. elegans TFIIH subunit GTF-2H5/TTDA is a non-essential transcription factor indispensable for DNA repair.</title>
        <authorList>
            <person name="Thijssen K.L."/>
            <person name="van der Woude M."/>
            <person name="Davo-Martinez C."/>
            <person name="Dekkers D.H.W."/>
            <person name="Sabatella M."/>
            <person name="Demmers J.A.A."/>
            <person name="Vermeulen W."/>
            <person name="Lans H."/>
        </authorList>
    </citation>
    <scope>FUNCTION</scope>
    <scope>SUBCELLULAR LOCATION</scope>
    <scope>DISRUPTION PHENOTYPE</scope>
</reference>
<name>TF2H5_CAEEL</name>
<dbReference type="EMBL" id="BX284603">
    <property type="protein sequence ID" value="CCD61809.1"/>
    <property type="molecule type" value="Genomic_DNA"/>
</dbReference>
<dbReference type="RefSeq" id="NP_497212.1">
    <property type="nucleotide sequence ID" value="NM_064811.8"/>
</dbReference>
<dbReference type="SMR" id="Q9N390"/>
<dbReference type="DIP" id="DIP-26454N"/>
<dbReference type="FunCoup" id="Q9N390">
    <property type="interactions" value="1293"/>
</dbReference>
<dbReference type="STRING" id="6239.Y55B1AL.2.1"/>
<dbReference type="PaxDb" id="6239-Y55B1AL.2"/>
<dbReference type="PeptideAtlas" id="Q9N390"/>
<dbReference type="EnsemblMetazoa" id="Y55B1AL.2.1">
    <property type="protein sequence ID" value="Y55B1AL.2.1"/>
    <property type="gene ID" value="WBGene00021904"/>
</dbReference>
<dbReference type="GeneID" id="190298"/>
<dbReference type="KEGG" id="cel:CELE_Y55B1AL.2"/>
<dbReference type="UCSC" id="Y55B1AL.2">
    <property type="organism name" value="c. elegans"/>
</dbReference>
<dbReference type="AGR" id="WB:WBGene00021904"/>
<dbReference type="CTD" id="190298"/>
<dbReference type="WormBase" id="Y55B1AL.2">
    <property type="protein sequence ID" value="CE22497"/>
    <property type="gene ID" value="WBGene00021904"/>
    <property type="gene designation" value="gtf-2H5"/>
</dbReference>
<dbReference type="eggNOG" id="KOG3451">
    <property type="taxonomic scope" value="Eukaryota"/>
</dbReference>
<dbReference type="GeneTree" id="ENSGT00390000004028"/>
<dbReference type="HOGENOM" id="CLU_166246_4_0_1"/>
<dbReference type="InParanoid" id="Q9N390"/>
<dbReference type="OMA" id="VKCDPAM"/>
<dbReference type="OrthoDB" id="354at2759"/>
<dbReference type="PhylomeDB" id="Q9N390"/>
<dbReference type="Reactome" id="R-CEL-112382">
    <property type="pathway name" value="Formation of RNA Pol II elongation complex"/>
</dbReference>
<dbReference type="Reactome" id="R-CEL-113418">
    <property type="pathway name" value="Formation of the Early Elongation Complex"/>
</dbReference>
<dbReference type="Reactome" id="R-CEL-5696395">
    <property type="pathway name" value="Formation of Incision Complex in GG-NER"/>
</dbReference>
<dbReference type="Reactome" id="R-CEL-5696400">
    <property type="pathway name" value="Dual Incision in GG-NER"/>
</dbReference>
<dbReference type="Reactome" id="R-CEL-674695">
    <property type="pathway name" value="RNA Polymerase II Pre-transcription Events"/>
</dbReference>
<dbReference type="Reactome" id="R-CEL-6781823">
    <property type="pathway name" value="Formation of TC-NER Pre-Incision Complex"/>
</dbReference>
<dbReference type="Reactome" id="R-CEL-6782135">
    <property type="pathway name" value="Dual incision in TC-NER"/>
</dbReference>
<dbReference type="Reactome" id="R-CEL-6782210">
    <property type="pathway name" value="Gap-filling DNA repair synthesis and ligation in TC-NER"/>
</dbReference>
<dbReference type="Reactome" id="R-CEL-6796648">
    <property type="pathway name" value="TP53 Regulates Transcription of DNA Repair Genes"/>
</dbReference>
<dbReference type="Reactome" id="R-CEL-72086">
    <property type="pathway name" value="mRNA Capping"/>
</dbReference>
<dbReference type="Reactome" id="R-CEL-73772">
    <property type="pathway name" value="RNA Polymerase I Promoter Escape"/>
</dbReference>
<dbReference type="Reactome" id="R-CEL-73776">
    <property type="pathway name" value="RNA Polymerase II Promoter Escape"/>
</dbReference>
<dbReference type="Reactome" id="R-CEL-73779">
    <property type="pathway name" value="RNA Polymerase II Transcription Pre-Initiation And Promoter Opening"/>
</dbReference>
<dbReference type="Reactome" id="R-CEL-75953">
    <property type="pathway name" value="RNA Polymerase II Transcription Initiation"/>
</dbReference>
<dbReference type="Reactome" id="R-CEL-75955">
    <property type="pathway name" value="RNA Polymerase II Transcription Elongation"/>
</dbReference>
<dbReference type="Reactome" id="R-CEL-76042">
    <property type="pathway name" value="RNA Polymerase II Transcription Initiation And Promoter Clearance"/>
</dbReference>
<dbReference type="Reactome" id="R-CEL-77075">
    <property type="pathway name" value="RNA Pol II CTD phosphorylation and interaction with CE"/>
</dbReference>
<dbReference type="PRO" id="PR:Q9N390"/>
<dbReference type="Proteomes" id="UP000001940">
    <property type="component" value="Chromosome III"/>
</dbReference>
<dbReference type="Bgee" id="WBGene00021904">
    <property type="expression patterns" value="Expressed in embryo and 4 other cell types or tissues"/>
</dbReference>
<dbReference type="GO" id="GO:0005694">
    <property type="term" value="C:chromosome"/>
    <property type="evidence" value="ECO:0007669"/>
    <property type="project" value="UniProtKB-SubCell"/>
</dbReference>
<dbReference type="GO" id="GO:0000439">
    <property type="term" value="C:transcription factor TFIIH core complex"/>
    <property type="evidence" value="ECO:0000318"/>
    <property type="project" value="GO_Central"/>
</dbReference>
<dbReference type="GO" id="GO:0005675">
    <property type="term" value="C:transcription factor TFIIH holo complex"/>
    <property type="evidence" value="ECO:0000318"/>
    <property type="project" value="GO_Central"/>
</dbReference>
<dbReference type="GO" id="GO:0006289">
    <property type="term" value="P:nucleotide-excision repair"/>
    <property type="evidence" value="ECO:0000315"/>
    <property type="project" value="UniProtKB"/>
</dbReference>
<dbReference type="GO" id="GO:0006294">
    <property type="term" value="P:nucleotide-excision repair, preincision complex assembly"/>
    <property type="evidence" value="ECO:0000318"/>
    <property type="project" value="GO_Central"/>
</dbReference>
<dbReference type="GO" id="GO:0006366">
    <property type="term" value="P:transcription by RNA polymerase II"/>
    <property type="evidence" value="ECO:0000315"/>
    <property type="project" value="UniProtKB"/>
</dbReference>
<dbReference type="GO" id="GO:0006367">
    <property type="term" value="P:transcription initiation at RNA polymerase II promoter"/>
    <property type="evidence" value="ECO:0007669"/>
    <property type="project" value="InterPro"/>
</dbReference>
<dbReference type="FunFam" id="3.30.70.1220:FF:000001">
    <property type="entry name" value="General transcription factor IIH subunit 5"/>
    <property type="match status" value="1"/>
</dbReference>
<dbReference type="Gene3D" id="3.30.70.1220">
    <property type="entry name" value="TFB5-like"/>
    <property type="match status" value="1"/>
</dbReference>
<dbReference type="InterPro" id="IPR035935">
    <property type="entry name" value="TFB5-like_sf"/>
</dbReference>
<dbReference type="InterPro" id="IPR009400">
    <property type="entry name" value="TFIIH_TTDA/Tfb5"/>
</dbReference>
<dbReference type="PANTHER" id="PTHR28580">
    <property type="entry name" value="GENERAL TRANSCRIPTION FACTOR IIH SUBUNIT 5"/>
    <property type="match status" value="1"/>
</dbReference>
<dbReference type="PANTHER" id="PTHR28580:SF1">
    <property type="entry name" value="GENERAL TRANSCRIPTION FACTOR IIH SUBUNIT 5"/>
    <property type="match status" value="1"/>
</dbReference>
<dbReference type="Pfam" id="PF06331">
    <property type="entry name" value="Tfb5"/>
    <property type="match status" value="1"/>
</dbReference>
<dbReference type="SMART" id="SM01395">
    <property type="entry name" value="Tbf5"/>
    <property type="match status" value="1"/>
</dbReference>
<dbReference type="SUPFAM" id="SSF142897">
    <property type="entry name" value="TFB5-like"/>
    <property type="match status" value="1"/>
</dbReference>
<gene>
    <name evidence="7" type="primary">gtf-2H5</name>
    <name evidence="7" type="ORF">Y55B1AL.2</name>
</gene>
<evidence type="ECO:0000250" key="1">
    <source>
        <dbReference type="UniProtKB" id="Q6ZYL4"/>
    </source>
</evidence>
<evidence type="ECO:0000255" key="2">
    <source>
        <dbReference type="RuleBase" id="RU368032"/>
    </source>
</evidence>
<evidence type="ECO:0000269" key="3">
    <source>
    </source>
</evidence>
<evidence type="ECO:0000303" key="4">
    <source>
    </source>
</evidence>
<evidence type="ECO:0000305" key="5"/>
<evidence type="ECO:0000312" key="6">
    <source>
        <dbReference type="Proteomes" id="UP000001940"/>
    </source>
</evidence>
<evidence type="ECO:0000312" key="7">
    <source>
        <dbReference type="WormBase" id="Y55B1AL.2"/>
    </source>
</evidence>
<organism evidence="6">
    <name type="scientific">Caenorhabditis elegans</name>
    <dbReference type="NCBI Taxonomy" id="6239"/>
    <lineage>
        <taxon>Eukaryota</taxon>
        <taxon>Metazoa</taxon>
        <taxon>Ecdysozoa</taxon>
        <taxon>Nematoda</taxon>
        <taxon>Chromadorea</taxon>
        <taxon>Rhabditida</taxon>
        <taxon>Rhabditina</taxon>
        <taxon>Rhabditomorpha</taxon>
        <taxon>Rhabditoidea</taxon>
        <taxon>Rhabditidae</taxon>
        <taxon>Peloderinae</taxon>
        <taxon>Caenorhabditis</taxon>
    </lineage>
</organism>
<protein>
    <recommendedName>
        <fullName evidence="2">General transcription and DNA repair factor IIH subunit TFB5</fullName>
    </recommendedName>
    <alternativeName>
        <fullName evidence="4">TFIIH subunit GTF-2H5</fullName>
    </alternativeName>
</protein>
<feature type="chain" id="PRO_0000456248" description="General transcription and DNA repair factor IIH subunit TFB5">
    <location>
        <begin position="1"/>
        <end position="71"/>
    </location>
</feature>